<organism>
    <name type="scientific">Mamestra brassicae nuclear polyhedrosis virus</name>
    <name type="common">MbNPV</name>
    <dbReference type="NCBI Taxonomy" id="78219"/>
    <lineage>
        <taxon>Viruses</taxon>
        <taxon>Viruses incertae sedis</taxon>
        <taxon>Naldaviricetes</taxon>
        <taxon>Lefavirales</taxon>
        <taxon>Baculoviridae</taxon>
        <taxon>Alphabaculovirus</taxon>
        <taxon>Alphabaculovirus mabrassicae</taxon>
    </lineage>
</organism>
<gene>
    <name type="primary">PH</name>
    <name type="synonym">P29</name>
    <name type="synonym">POLH</name>
</gene>
<name>PYHD_NPVMB</name>
<accession>P12423</accession>
<keyword id="KW-0842">Viral occlusion body</keyword>
<proteinExistence type="inferred from homology"/>
<reference key="1">
    <citation type="journal article" date="1989" name="Virus Res.">
        <title>Conservation of polyhedrin gene promoter function between Autographa californica and Mamestra brassicae nuclear polyhedrosis viruses.</title>
        <authorList>
            <person name="Cameron I.R."/>
            <person name="Possee R.D."/>
        </authorList>
    </citation>
    <scope>NUCLEOTIDE SEQUENCE [GENOMIC DNA]</scope>
    <source>
        <strain>Oxford</strain>
    </source>
</reference>
<comment type="function">
    <text>Major component of the virus occlusion bodies, which are large proteinaceous structures (polyhedra), that protect the virus from the outside environment for extended periods until they are ingested by insect larvae.</text>
</comment>
<comment type="similarity">
    <text evidence="1">Belongs to the polyhedrin family.</text>
</comment>
<feature type="chain" id="PRO_0000217252" description="Polyhedrin">
    <location>
        <begin position="1"/>
        <end position="246"/>
    </location>
</feature>
<organismHost>
    <name type="scientific">Lepidoptera</name>
    <name type="common">butterflies and moths</name>
    <dbReference type="NCBI Taxonomy" id="7088"/>
</organismHost>
<sequence>MYTRYSYNPSLGRTYVYDNKYYKNLGSVIKNANRKRHYIEHELEEKTLDPLDRYLVAEDPFLGPGKNQKLTLFKEIRNVKPDTMKLVVNWSGKEFLRETWTRFMEDSFPIVNDQEVMDVFLVINMRPTRPNRCFKFLAQHALRCDPDYVPHEVIRIVEPSYVGSNNEYRVSLAKRGGGCPVMNLHSEYTNSFEEFINRVIWENFYKPIVYVGTDSAEEEEILLEVSLVFKIKEFAPDAPLYNGPAY</sequence>
<protein>
    <recommendedName>
        <fullName>Polyhedrin</fullName>
    </recommendedName>
    <alternativeName>
        <fullName>Major occlusion protein</fullName>
    </alternativeName>
</protein>
<evidence type="ECO:0000305" key="1"/>
<dbReference type="EMBL" id="M20927">
    <property type="protein sequence ID" value="AAA69768.1"/>
    <property type="molecule type" value="Genomic_DNA"/>
</dbReference>
<dbReference type="PIR" id="A42756">
    <property type="entry name" value="A42756"/>
</dbReference>
<dbReference type="SMR" id="P12423"/>
<dbReference type="GO" id="GO:0039679">
    <property type="term" value="C:viral occlusion body"/>
    <property type="evidence" value="ECO:0007669"/>
    <property type="project" value="UniProtKB-KW"/>
</dbReference>
<dbReference type="GO" id="GO:0005198">
    <property type="term" value="F:structural molecule activity"/>
    <property type="evidence" value="ECO:0007669"/>
    <property type="project" value="InterPro"/>
</dbReference>
<dbReference type="InterPro" id="IPR001746">
    <property type="entry name" value="Polyhedrin"/>
</dbReference>
<dbReference type="Pfam" id="PF00738">
    <property type="entry name" value="Polyhedrin"/>
    <property type="match status" value="1"/>
</dbReference>